<sequence length="9" mass="988">LPLDDLSDT</sequence>
<evidence type="ECO:0000269" key="1">
    <source>
    </source>
</evidence>
<evidence type="ECO:0000303" key="2">
    <source>
    </source>
</evidence>
<evidence type="ECO:0000303" key="3">
    <source>
    </source>
</evidence>
<evidence type="ECO:0000305" key="4"/>
<evidence type="ECO:0000305" key="5">
    <source>
    </source>
</evidence>
<name>TX1AB_DINQU</name>
<organism>
    <name type="scientific">Dinoponera quadriceps</name>
    <name type="common">South American ant</name>
    <dbReference type="NCBI Taxonomy" id="609295"/>
    <lineage>
        <taxon>Eukaryota</taxon>
        <taxon>Metazoa</taxon>
        <taxon>Ecdysozoa</taxon>
        <taxon>Arthropoda</taxon>
        <taxon>Hexapoda</taxon>
        <taxon>Insecta</taxon>
        <taxon>Pterygota</taxon>
        <taxon>Neoptera</taxon>
        <taxon>Endopterygota</taxon>
        <taxon>Hymenoptera</taxon>
        <taxon>Apocrita</taxon>
        <taxon>Aculeata</taxon>
        <taxon>Formicoidea</taxon>
        <taxon>Formicidae</taxon>
        <taxon>Ponerinae</taxon>
        <taxon>Ponerini</taxon>
        <taxon>Dinoponera</taxon>
    </lineage>
</organism>
<comment type="function">
    <molecule>U1-poneritoxin-Dq1b</molecule>
    <text evidence="4">May have antimicrobial properties, like most ant linear peptides.</text>
</comment>
<comment type="function">
    <molecule>U1-poneritoxin-Dq1a</molecule>
    <text evidence="4">May have antimicrobial properties, like most ant linear peptides.</text>
</comment>
<comment type="subcellular location">
    <subcellularLocation>
        <location evidence="1">Secreted</location>
    </subcellularLocation>
</comment>
<comment type="tissue specificity">
    <text evidence="5">Expressed by the venom gland.</text>
</comment>
<comment type="mass spectrometry" mass="987.9" method="Electrospray" evidence="1">
    <molecule>U1-poneritoxin-Dq1b</molecule>
    <text>U1-PONTX-Dq1b.</text>
</comment>
<comment type="mass spectrometry" mass="762.3" method="Electrospray" evidence="1">
    <molecule>U1-poneritoxin-Dq1a</molecule>
    <text>U1-PONTX-Dq1a.</text>
</comment>
<keyword id="KW-0929">Antimicrobial</keyword>
<keyword id="KW-0903">Direct protein sequencing</keyword>
<keyword id="KW-1185">Reference proteome</keyword>
<keyword id="KW-0964">Secreted</keyword>
<feature type="peptide" id="PRO_0000430027" description="U1-poneritoxin-Dq1b" evidence="1">
    <location>
        <begin position="1"/>
        <end position="9"/>
    </location>
</feature>
<feature type="peptide" id="PRO_0000430028" description="U1-poneritoxin-Dq1a" evidence="1">
    <location>
        <begin position="2"/>
        <end position="9"/>
    </location>
</feature>
<feature type="unsure residue" description="L or I" evidence="1">
    <location>
        <position position="1"/>
    </location>
</feature>
<feature type="unsure residue" description="L or I" evidence="1">
    <location>
        <position position="3"/>
    </location>
</feature>
<feature type="unsure residue" description="L or I" evidence="1">
    <location>
        <position position="6"/>
    </location>
</feature>
<proteinExistence type="evidence at protein level"/>
<protein>
    <recommendedName>
        <fullName evidence="3">U1-poneritoxin-Dq1b</fullName>
        <shortName evidence="3">U1-PONTX-Dq1b</shortName>
    </recommendedName>
    <alternativeName>
        <fullName evidence="2">Peptide Dq-987</fullName>
    </alternativeName>
    <alternativeName>
        <fullName evidence="4">Poneratoxin</fullName>
    </alternativeName>
    <component>
        <recommendedName>
            <fullName evidence="3">U1-poneritoxin-Dq1a</fullName>
            <shortName evidence="3">U1-PONTX-Dq1a</shortName>
        </recommendedName>
        <alternativeName>
            <fullName evidence="2">Peptide Dq-761</fullName>
        </alternativeName>
    </component>
</protein>
<reference key="1">
    <citation type="journal article" date="2013" name="J. Proteomics">
        <title>Peptidomic comparison and characterization of the major components of the venom of the giant ant Dinoponera quadriceps collected in four different areas of Brazil.</title>
        <authorList>
            <person name="Cologna C.T."/>
            <person name="Cardoso Jdos S."/>
            <person name="Jourdan E."/>
            <person name="Degueldre M."/>
            <person name="Upert G."/>
            <person name="Gilles N."/>
            <person name="Uetanabaro A.P."/>
            <person name="Costa Neto E.M."/>
            <person name="Thonart P."/>
            <person name="de Pauw E."/>
            <person name="Quinton L."/>
        </authorList>
    </citation>
    <scope>PROTEIN SEQUENCE</scope>
    <scope>SUBCELLULAR LOCATION</scope>
    <scope>MASS SPECTROMETRY</scope>
    <source>
        <tissue>Venom</tissue>
    </source>
</reference>
<reference key="2">
    <citation type="journal article" date="2016" name="Toxins">
        <title>The biochemical toxin arsenal from ant venoms.</title>
        <authorList>
            <person name="Touchard A."/>
            <person name="Aili S.R."/>
            <person name="Fox E.G."/>
            <person name="Escoubas P."/>
            <person name="Orivel J."/>
            <person name="Nicholson G.M."/>
            <person name="Dejean A."/>
        </authorList>
    </citation>
    <scope>REVIEW</scope>
    <scope>NOMENCLATURE</scope>
</reference>
<accession>C0HJK2</accession>
<dbReference type="Proteomes" id="UP000515204">
    <property type="component" value="Unplaced"/>
</dbReference>
<dbReference type="GO" id="GO:0005576">
    <property type="term" value="C:extracellular region"/>
    <property type="evidence" value="ECO:0007669"/>
    <property type="project" value="UniProtKB-SubCell"/>
</dbReference>